<protein>
    <recommendedName>
        <fullName evidence="1">GTPase Obg</fullName>
        <ecNumber evidence="1">3.6.5.-</ecNumber>
    </recommendedName>
    <alternativeName>
        <fullName evidence="1">GTP-binding protein Obg</fullName>
    </alternativeName>
</protein>
<dbReference type="EC" id="3.6.5.-" evidence="1"/>
<dbReference type="EMBL" id="CP000924">
    <property type="protein sequence ID" value="ABY95081.1"/>
    <property type="molecule type" value="Genomic_DNA"/>
</dbReference>
<dbReference type="SMR" id="B0KAB8"/>
<dbReference type="STRING" id="340099.Teth39_1431"/>
<dbReference type="KEGG" id="tpd:Teth39_1431"/>
<dbReference type="eggNOG" id="COG0536">
    <property type="taxonomic scope" value="Bacteria"/>
</dbReference>
<dbReference type="HOGENOM" id="CLU_011747_2_1_9"/>
<dbReference type="Proteomes" id="UP000002156">
    <property type="component" value="Chromosome"/>
</dbReference>
<dbReference type="GO" id="GO:0005737">
    <property type="term" value="C:cytoplasm"/>
    <property type="evidence" value="ECO:0007669"/>
    <property type="project" value="UniProtKB-SubCell"/>
</dbReference>
<dbReference type="GO" id="GO:0005525">
    <property type="term" value="F:GTP binding"/>
    <property type="evidence" value="ECO:0007669"/>
    <property type="project" value="UniProtKB-UniRule"/>
</dbReference>
<dbReference type="GO" id="GO:0003924">
    <property type="term" value="F:GTPase activity"/>
    <property type="evidence" value="ECO:0007669"/>
    <property type="project" value="UniProtKB-UniRule"/>
</dbReference>
<dbReference type="GO" id="GO:0000287">
    <property type="term" value="F:magnesium ion binding"/>
    <property type="evidence" value="ECO:0007669"/>
    <property type="project" value="InterPro"/>
</dbReference>
<dbReference type="GO" id="GO:0042254">
    <property type="term" value="P:ribosome biogenesis"/>
    <property type="evidence" value="ECO:0007669"/>
    <property type="project" value="UniProtKB-UniRule"/>
</dbReference>
<dbReference type="CDD" id="cd01898">
    <property type="entry name" value="Obg"/>
    <property type="match status" value="1"/>
</dbReference>
<dbReference type="FunFam" id="2.70.210.12:FF:000001">
    <property type="entry name" value="GTPase Obg"/>
    <property type="match status" value="1"/>
</dbReference>
<dbReference type="Gene3D" id="3.30.300.350">
    <property type="entry name" value="GTP-binding protein OBG, C-terminal domain"/>
    <property type="match status" value="1"/>
</dbReference>
<dbReference type="Gene3D" id="2.70.210.12">
    <property type="entry name" value="GTP1/OBG domain"/>
    <property type="match status" value="1"/>
</dbReference>
<dbReference type="Gene3D" id="3.40.50.300">
    <property type="entry name" value="P-loop containing nucleotide triphosphate hydrolases"/>
    <property type="match status" value="1"/>
</dbReference>
<dbReference type="HAMAP" id="MF_01454">
    <property type="entry name" value="GTPase_Obg"/>
    <property type="match status" value="1"/>
</dbReference>
<dbReference type="InterPro" id="IPR031167">
    <property type="entry name" value="G_OBG"/>
</dbReference>
<dbReference type="InterPro" id="IPR006073">
    <property type="entry name" value="GTP-bd"/>
</dbReference>
<dbReference type="InterPro" id="IPR014100">
    <property type="entry name" value="GTP-bd_Obg/CgtA"/>
</dbReference>
<dbReference type="InterPro" id="IPR036346">
    <property type="entry name" value="GTP-bd_prot_GTP1/OBG_C_sf"/>
</dbReference>
<dbReference type="InterPro" id="IPR006074">
    <property type="entry name" value="GTP1-OBG_CS"/>
</dbReference>
<dbReference type="InterPro" id="IPR006169">
    <property type="entry name" value="GTP1_OBG_dom"/>
</dbReference>
<dbReference type="InterPro" id="IPR036726">
    <property type="entry name" value="GTP1_OBG_dom_sf"/>
</dbReference>
<dbReference type="InterPro" id="IPR045086">
    <property type="entry name" value="OBG_GTPase"/>
</dbReference>
<dbReference type="InterPro" id="IPR015349">
    <property type="entry name" value="OCT_dom"/>
</dbReference>
<dbReference type="InterPro" id="IPR027417">
    <property type="entry name" value="P-loop_NTPase"/>
</dbReference>
<dbReference type="InterPro" id="IPR005225">
    <property type="entry name" value="Small_GTP-bd"/>
</dbReference>
<dbReference type="NCBIfam" id="TIGR02729">
    <property type="entry name" value="Obg_CgtA"/>
    <property type="match status" value="1"/>
</dbReference>
<dbReference type="NCBIfam" id="TIGR03595">
    <property type="entry name" value="Obg_CgtA_exten"/>
    <property type="match status" value="1"/>
</dbReference>
<dbReference type="NCBIfam" id="NF008954">
    <property type="entry name" value="PRK12296.1"/>
    <property type="match status" value="1"/>
</dbReference>
<dbReference type="NCBIfam" id="NF008955">
    <property type="entry name" value="PRK12297.1"/>
    <property type="match status" value="1"/>
</dbReference>
<dbReference type="NCBIfam" id="NF008956">
    <property type="entry name" value="PRK12299.1"/>
    <property type="match status" value="1"/>
</dbReference>
<dbReference type="NCBIfam" id="TIGR00231">
    <property type="entry name" value="small_GTP"/>
    <property type="match status" value="1"/>
</dbReference>
<dbReference type="PANTHER" id="PTHR11702">
    <property type="entry name" value="DEVELOPMENTALLY REGULATED GTP-BINDING PROTEIN-RELATED"/>
    <property type="match status" value="1"/>
</dbReference>
<dbReference type="PANTHER" id="PTHR11702:SF31">
    <property type="entry name" value="MITOCHONDRIAL RIBOSOME-ASSOCIATED GTPASE 2"/>
    <property type="match status" value="1"/>
</dbReference>
<dbReference type="Pfam" id="PF09269">
    <property type="entry name" value="DUF1967"/>
    <property type="match status" value="1"/>
</dbReference>
<dbReference type="Pfam" id="PF01018">
    <property type="entry name" value="GTP1_OBG"/>
    <property type="match status" value="1"/>
</dbReference>
<dbReference type="Pfam" id="PF01926">
    <property type="entry name" value="MMR_HSR1"/>
    <property type="match status" value="1"/>
</dbReference>
<dbReference type="PIRSF" id="PIRSF002401">
    <property type="entry name" value="GTP_bd_Obg/CgtA"/>
    <property type="match status" value="1"/>
</dbReference>
<dbReference type="PRINTS" id="PR00326">
    <property type="entry name" value="GTP1OBG"/>
</dbReference>
<dbReference type="SUPFAM" id="SSF102741">
    <property type="entry name" value="Obg GTP-binding protein C-terminal domain"/>
    <property type="match status" value="1"/>
</dbReference>
<dbReference type="SUPFAM" id="SSF82051">
    <property type="entry name" value="Obg GTP-binding protein N-terminal domain"/>
    <property type="match status" value="1"/>
</dbReference>
<dbReference type="SUPFAM" id="SSF52540">
    <property type="entry name" value="P-loop containing nucleoside triphosphate hydrolases"/>
    <property type="match status" value="1"/>
</dbReference>
<dbReference type="PROSITE" id="PS51710">
    <property type="entry name" value="G_OBG"/>
    <property type="match status" value="1"/>
</dbReference>
<dbReference type="PROSITE" id="PS00905">
    <property type="entry name" value="GTP1_OBG"/>
    <property type="match status" value="1"/>
</dbReference>
<dbReference type="PROSITE" id="PS51883">
    <property type="entry name" value="OBG"/>
    <property type="match status" value="1"/>
</dbReference>
<dbReference type="PROSITE" id="PS51881">
    <property type="entry name" value="OCT"/>
    <property type="match status" value="1"/>
</dbReference>
<gene>
    <name evidence="1" type="primary">obg</name>
    <name type="ordered locus">Teth39_1431</name>
</gene>
<name>OBG_THEP3</name>
<accession>B0KAB8</accession>
<comment type="function">
    <text evidence="1">An essential GTPase which binds GTP, GDP and possibly (p)ppGpp with moderate affinity, with high nucleotide exchange rates and a fairly low GTP hydrolysis rate. Plays a role in control of the cell cycle, stress response, ribosome biogenesis and in those bacteria that undergo differentiation, in morphogenesis control.</text>
</comment>
<comment type="cofactor">
    <cofactor evidence="1">
        <name>Mg(2+)</name>
        <dbReference type="ChEBI" id="CHEBI:18420"/>
    </cofactor>
</comment>
<comment type="subunit">
    <text evidence="1">Monomer.</text>
</comment>
<comment type="subcellular location">
    <subcellularLocation>
        <location evidence="1">Cytoplasm</location>
    </subcellularLocation>
</comment>
<comment type="similarity">
    <text evidence="1">Belongs to the TRAFAC class OBG-HflX-like GTPase superfamily. OBG GTPase family.</text>
</comment>
<evidence type="ECO:0000255" key="1">
    <source>
        <dbReference type="HAMAP-Rule" id="MF_01454"/>
    </source>
</evidence>
<evidence type="ECO:0000255" key="2">
    <source>
        <dbReference type="PROSITE-ProRule" id="PRU01229"/>
    </source>
</evidence>
<evidence type="ECO:0000255" key="3">
    <source>
        <dbReference type="PROSITE-ProRule" id="PRU01231"/>
    </source>
</evidence>
<organism>
    <name type="scientific">Thermoanaerobacter pseudethanolicus (strain ATCC 33223 / 39E)</name>
    <name type="common">Clostridium thermohydrosulfuricum</name>
    <dbReference type="NCBI Taxonomy" id="340099"/>
    <lineage>
        <taxon>Bacteria</taxon>
        <taxon>Bacillati</taxon>
        <taxon>Bacillota</taxon>
        <taxon>Clostridia</taxon>
        <taxon>Thermoanaerobacterales</taxon>
        <taxon>Thermoanaerobacteraceae</taxon>
        <taxon>Thermoanaerobacter</taxon>
    </lineage>
</organism>
<feature type="chain" id="PRO_0000386346" description="GTPase Obg">
    <location>
        <begin position="1"/>
        <end position="423"/>
    </location>
</feature>
<feature type="domain" description="Obg" evidence="3">
    <location>
        <begin position="1"/>
        <end position="158"/>
    </location>
</feature>
<feature type="domain" description="OBG-type G" evidence="1">
    <location>
        <begin position="159"/>
        <end position="329"/>
    </location>
</feature>
<feature type="domain" description="OCT" evidence="2">
    <location>
        <begin position="346"/>
        <end position="423"/>
    </location>
</feature>
<feature type="binding site" evidence="1">
    <location>
        <begin position="165"/>
        <end position="172"/>
    </location>
    <ligand>
        <name>GTP</name>
        <dbReference type="ChEBI" id="CHEBI:37565"/>
    </ligand>
</feature>
<feature type="binding site" evidence="1">
    <location>
        <position position="172"/>
    </location>
    <ligand>
        <name>Mg(2+)</name>
        <dbReference type="ChEBI" id="CHEBI:18420"/>
    </ligand>
</feature>
<feature type="binding site" evidence="1">
    <location>
        <begin position="190"/>
        <end position="194"/>
    </location>
    <ligand>
        <name>GTP</name>
        <dbReference type="ChEBI" id="CHEBI:37565"/>
    </ligand>
</feature>
<feature type="binding site" evidence="1">
    <location>
        <position position="192"/>
    </location>
    <ligand>
        <name>Mg(2+)</name>
        <dbReference type="ChEBI" id="CHEBI:18420"/>
    </ligand>
</feature>
<feature type="binding site" evidence="1">
    <location>
        <begin position="211"/>
        <end position="214"/>
    </location>
    <ligand>
        <name>GTP</name>
        <dbReference type="ChEBI" id="CHEBI:37565"/>
    </ligand>
</feature>
<feature type="binding site" evidence="1">
    <location>
        <begin position="281"/>
        <end position="284"/>
    </location>
    <ligand>
        <name>GTP</name>
        <dbReference type="ChEBI" id="CHEBI:37565"/>
    </ligand>
</feature>
<feature type="binding site" evidence="1">
    <location>
        <begin position="310"/>
        <end position="312"/>
    </location>
    <ligand>
        <name>GTP</name>
        <dbReference type="ChEBI" id="CHEBI:37565"/>
    </ligand>
</feature>
<keyword id="KW-0963">Cytoplasm</keyword>
<keyword id="KW-0342">GTP-binding</keyword>
<keyword id="KW-0378">Hydrolase</keyword>
<keyword id="KW-0460">Magnesium</keyword>
<keyword id="KW-0479">Metal-binding</keyword>
<keyword id="KW-0547">Nucleotide-binding</keyword>
<keyword id="KW-1185">Reference proteome</keyword>
<sequence length="423" mass="47081">MFIDTARIYIKAGDGGNGIISFRREKYVAYGGPDGGDGGKGGDVIFIADPNLSTLLDFKYRKKYIAQNGENGRGKNQYGKNGEDLYIKVPVGTLIINDETGEIIADLVKPNQKAIVLRGGKGGRGNAKFATPTLKTPRFAESGEKGKEMWVRLELKLLADVGLIGFPNAGKSTLLASCTRAKPKIANYPFTTLTPNLGVVEHKGKSFVMADIPGLIEGAHRGEGLGHDFLRHIERTKMLIHVVDVSASEGRDPIEDFEKINEELKLYSERLLTLSQIVAANKIDIQSGKENFPAFEKEIKKRGYEVYPISALTKVGIDKLLDKTIEILSSIPVEEIKEVPEVIVYTPPEEEETLNIEVKDNTYYLSGTKIDKLLKRVNLQDEHSLRYFEMLLRKSGVIDALKEKGFKSGDTINVRDFEFEYYE</sequence>
<proteinExistence type="inferred from homology"/>
<reference key="1">
    <citation type="submission" date="2008-01" db="EMBL/GenBank/DDBJ databases">
        <title>Complete sequence of Thermoanaerobacter pseudethanolicus 39E.</title>
        <authorList>
            <person name="Copeland A."/>
            <person name="Lucas S."/>
            <person name="Lapidus A."/>
            <person name="Barry K."/>
            <person name="Glavina del Rio T."/>
            <person name="Dalin E."/>
            <person name="Tice H."/>
            <person name="Pitluck S."/>
            <person name="Bruce D."/>
            <person name="Goodwin L."/>
            <person name="Saunders E."/>
            <person name="Brettin T."/>
            <person name="Detter J.C."/>
            <person name="Han C."/>
            <person name="Schmutz J."/>
            <person name="Larimer F."/>
            <person name="Land M."/>
            <person name="Hauser L."/>
            <person name="Kyrpides N."/>
            <person name="Lykidis A."/>
            <person name="Hemme C."/>
            <person name="Fields M.W."/>
            <person name="He Z."/>
            <person name="Zhou J."/>
            <person name="Richardson P."/>
        </authorList>
    </citation>
    <scope>NUCLEOTIDE SEQUENCE [LARGE SCALE GENOMIC DNA]</scope>
    <source>
        <strain>ATCC 33223 / DSM 2355 / 39E</strain>
    </source>
</reference>